<gene>
    <name evidence="1" type="primary">fni</name>
    <name type="ordered locus">LAR_0859</name>
</gene>
<dbReference type="EC" id="5.3.3.2" evidence="1"/>
<dbReference type="EMBL" id="AP007281">
    <property type="protein sequence ID" value="BAG25375.1"/>
    <property type="molecule type" value="Genomic_DNA"/>
</dbReference>
<dbReference type="RefSeq" id="WP_003667890.1">
    <property type="nucleotide sequence ID" value="NC_010609.1"/>
</dbReference>
<dbReference type="SMR" id="B2G7E3"/>
<dbReference type="KEGG" id="lrf:LAR_0859"/>
<dbReference type="HOGENOM" id="CLU_065515_0_0_9"/>
<dbReference type="GO" id="GO:0005737">
    <property type="term" value="C:cytoplasm"/>
    <property type="evidence" value="ECO:0007669"/>
    <property type="project" value="UniProtKB-SubCell"/>
</dbReference>
<dbReference type="GO" id="GO:0010181">
    <property type="term" value="F:FMN binding"/>
    <property type="evidence" value="ECO:0007669"/>
    <property type="project" value="UniProtKB-UniRule"/>
</dbReference>
<dbReference type="GO" id="GO:0004452">
    <property type="term" value="F:isopentenyl-diphosphate delta-isomerase activity"/>
    <property type="evidence" value="ECO:0007669"/>
    <property type="project" value="UniProtKB-UniRule"/>
</dbReference>
<dbReference type="GO" id="GO:0000287">
    <property type="term" value="F:magnesium ion binding"/>
    <property type="evidence" value="ECO:0007669"/>
    <property type="project" value="UniProtKB-UniRule"/>
</dbReference>
<dbReference type="GO" id="GO:0070402">
    <property type="term" value="F:NADPH binding"/>
    <property type="evidence" value="ECO:0007669"/>
    <property type="project" value="UniProtKB-UniRule"/>
</dbReference>
<dbReference type="GO" id="GO:0016491">
    <property type="term" value="F:oxidoreductase activity"/>
    <property type="evidence" value="ECO:0007669"/>
    <property type="project" value="InterPro"/>
</dbReference>
<dbReference type="GO" id="GO:0008299">
    <property type="term" value="P:isoprenoid biosynthetic process"/>
    <property type="evidence" value="ECO:0007669"/>
    <property type="project" value="UniProtKB-UniRule"/>
</dbReference>
<dbReference type="CDD" id="cd02811">
    <property type="entry name" value="IDI-2_FMN"/>
    <property type="match status" value="1"/>
</dbReference>
<dbReference type="Gene3D" id="3.20.20.70">
    <property type="entry name" value="Aldolase class I"/>
    <property type="match status" value="1"/>
</dbReference>
<dbReference type="HAMAP" id="MF_00354">
    <property type="entry name" value="Idi_2"/>
    <property type="match status" value="1"/>
</dbReference>
<dbReference type="InterPro" id="IPR013785">
    <property type="entry name" value="Aldolase_TIM"/>
</dbReference>
<dbReference type="InterPro" id="IPR000262">
    <property type="entry name" value="FMN-dep_DH"/>
</dbReference>
<dbReference type="InterPro" id="IPR011179">
    <property type="entry name" value="IPdP_isomerase"/>
</dbReference>
<dbReference type="NCBIfam" id="TIGR02151">
    <property type="entry name" value="IPP_isom_2"/>
    <property type="match status" value="1"/>
</dbReference>
<dbReference type="PANTHER" id="PTHR43665">
    <property type="entry name" value="ISOPENTENYL-DIPHOSPHATE DELTA-ISOMERASE"/>
    <property type="match status" value="1"/>
</dbReference>
<dbReference type="PANTHER" id="PTHR43665:SF1">
    <property type="entry name" value="ISOPENTENYL-DIPHOSPHATE DELTA-ISOMERASE"/>
    <property type="match status" value="1"/>
</dbReference>
<dbReference type="Pfam" id="PF01070">
    <property type="entry name" value="FMN_dh"/>
    <property type="match status" value="1"/>
</dbReference>
<dbReference type="PIRSF" id="PIRSF003314">
    <property type="entry name" value="IPP_isomerase"/>
    <property type="match status" value="1"/>
</dbReference>
<dbReference type="SUPFAM" id="SSF51395">
    <property type="entry name" value="FMN-linked oxidoreductases"/>
    <property type="match status" value="1"/>
</dbReference>
<protein>
    <recommendedName>
        <fullName evidence="1">Isopentenyl-diphosphate delta-isomerase</fullName>
        <shortName evidence="1">IPP isomerase</shortName>
        <ecNumber evidence="1">5.3.3.2</ecNumber>
    </recommendedName>
    <alternativeName>
        <fullName evidence="1">Isopentenyl diphosphate:dimethylallyl diphosphate isomerase</fullName>
    </alternativeName>
    <alternativeName>
        <fullName evidence="1">Isopentenyl pyrophosphate isomerase</fullName>
    </alternativeName>
    <alternativeName>
        <fullName evidence="1">Type 2 isopentenyl diphosphate isomerase</fullName>
        <shortName evidence="1">IDI-2</shortName>
    </alternativeName>
</protein>
<keyword id="KW-0963">Cytoplasm</keyword>
<keyword id="KW-0285">Flavoprotein</keyword>
<keyword id="KW-0288">FMN</keyword>
<keyword id="KW-0413">Isomerase</keyword>
<keyword id="KW-0414">Isoprene biosynthesis</keyword>
<keyword id="KW-0460">Magnesium</keyword>
<keyword id="KW-0479">Metal-binding</keyword>
<keyword id="KW-0521">NADP</keyword>
<evidence type="ECO:0000255" key="1">
    <source>
        <dbReference type="HAMAP-Rule" id="MF_00354"/>
    </source>
</evidence>
<proteinExistence type="inferred from homology"/>
<comment type="function">
    <text evidence="1">Involved in the biosynthesis of isoprenoids. Catalyzes the 1,3-allylic rearrangement of the homoallylic substrate isopentenyl (IPP) to its allylic isomer, dimethylallyl diphosphate (DMAPP).</text>
</comment>
<comment type="catalytic activity">
    <reaction evidence="1">
        <text>isopentenyl diphosphate = dimethylallyl diphosphate</text>
        <dbReference type="Rhea" id="RHEA:23284"/>
        <dbReference type="ChEBI" id="CHEBI:57623"/>
        <dbReference type="ChEBI" id="CHEBI:128769"/>
        <dbReference type="EC" id="5.3.3.2"/>
    </reaction>
</comment>
<comment type="cofactor">
    <cofactor evidence="1">
        <name>FMN</name>
        <dbReference type="ChEBI" id="CHEBI:58210"/>
    </cofactor>
</comment>
<comment type="cofactor">
    <cofactor evidence="1">
        <name>NADPH</name>
        <dbReference type="ChEBI" id="CHEBI:57783"/>
    </cofactor>
</comment>
<comment type="cofactor">
    <cofactor evidence="1">
        <name>Mg(2+)</name>
        <dbReference type="ChEBI" id="CHEBI:18420"/>
    </cofactor>
</comment>
<comment type="subunit">
    <text evidence="1">Homooctamer. Dimer of tetramers.</text>
</comment>
<comment type="subcellular location">
    <subcellularLocation>
        <location evidence="1">Cytoplasm</location>
    </subcellularLocation>
</comment>
<comment type="similarity">
    <text evidence="1">Belongs to the IPP isomerase type 2 family.</text>
</comment>
<accession>B2G7E3</accession>
<organism>
    <name type="scientific">Limosilactobacillus reuteri subsp. reuteri (strain JCM 1112)</name>
    <name type="common">Lactobacillus reuteri</name>
    <dbReference type="NCBI Taxonomy" id="557433"/>
    <lineage>
        <taxon>Bacteria</taxon>
        <taxon>Bacillati</taxon>
        <taxon>Bacillota</taxon>
        <taxon>Bacilli</taxon>
        <taxon>Lactobacillales</taxon>
        <taxon>Lactobacillaceae</taxon>
        <taxon>Limosilactobacillus</taxon>
    </lineage>
</organism>
<sequence>MMESRHAQRKNEHLSLAAKYYDQVHQHHYFDQVRLIHDSLPEMTTDDVDLHVQLADNLEIECPFYIEAMTGGSDQALKINRQLAQLAHKHHLAMATGSLSIISKDPQSFSSFEIIREENPDGIIFANLSANASLDQAINAISLLKANALELHINAAQELIMPEGDRDFNWLDNIQYLVSELEVPVIVKEVGFGMSKTTIAKLQTHDVHLINVSGRGGTNFAAIENRRNHDINFESLLDWGQTTPESLLEAHSIRRGKTEIIASGGITSPLDVIKAGVLGARAVGVAGYFLNILQNEGYEALDQTLGEWQVIVKRLLALLGCSSFTELSRVEYVLGTDLLSYARQRHLR</sequence>
<feature type="chain" id="PRO_1000120544" description="Isopentenyl-diphosphate delta-isomerase">
    <location>
        <begin position="1"/>
        <end position="348"/>
    </location>
</feature>
<feature type="binding site" evidence="1">
    <location>
        <begin position="9"/>
        <end position="10"/>
    </location>
    <ligand>
        <name>substrate</name>
    </ligand>
</feature>
<feature type="binding site" evidence="1">
    <location>
        <begin position="68"/>
        <end position="70"/>
    </location>
    <ligand>
        <name>FMN</name>
        <dbReference type="ChEBI" id="CHEBI:58210"/>
    </ligand>
</feature>
<feature type="binding site" evidence="1">
    <location>
        <position position="98"/>
    </location>
    <ligand>
        <name>FMN</name>
        <dbReference type="ChEBI" id="CHEBI:58210"/>
    </ligand>
</feature>
<feature type="binding site" evidence="1">
    <location>
        <position position="127"/>
    </location>
    <ligand>
        <name>FMN</name>
        <dbReference type="ChEBI" id="CHEBI:58210"/>
    </ligand>
</feature>
<feature type="binding site" evidence="1">
    <location>
        <position position="157"/>
    </location>
    <ligand>
        <name>substrate</name>
    </ligand>
</feature>
<feature type="binding site" evidence="1">
    <location>
        <position position="158"/>
    </location>
    <ligand>
        <name>Mg(2+)</name>
        <dbReference type="ChEBI" id="CHEBI:18420"/>
    </ligand>
</feature>
<feature type="binding site" evidence="1">
    <location>
        <position position="188"/>
    </location>
    <ligand>
        <name>FMN</name>
        <dbReference type="ChEBI" id="CHEBI:58210"/>
    </ligand>
</feature>
<feature type="binding site" evidence="1">
    <location>
        <position position="213"/>
    </location>
    <ligand>
        <name>FMN</name>
        <dbReference type="ChEBI" id="CHEBI:58210"/>
    </ligand>
</feature>
<feature type="binding site" evidence="1">
    <location>
        <position position="218"/>
    </location>
    <ligand>
        <name>FMN</name>
        <dbReference type="ChEBI" id="CHEBI:58210"/>
    </ligand>
</feature>
<feature type="binding site" evidence="1">
    <location>
        <begin position="286"/>
        <end position="287"/>
    </location>
    <ligand>
        <name>FMN</name>
        <dbReference type="ChEBI" id="CHEBI:58210"/>
    </ligand>
</feature>
<name>IDI2_LIMRJ</name>
<reference key="1">
    <citation type="journal article" date="2008" name="DNA Res.">
        <title>Comparative genome analysis of Lactobacillus reuteri and Lactobacillus fermentum reveal a genomic island for reuterin and cobalamin production.</title>
        <authorList>
            <person name="Morita H."/>
            <person name="Toh H."/>
            <person name="Fukuda S."/>
            <person name="Horikawa H."/>
            <person name="Oshima K."/>
            <person name="Suzuki T."/>
            <person name="Murakami M."/>
            <person name="Hisamatsu S."/>
            <person name="Kato Y."/>
            <person name="Takizawa T."/>
            <person name="Fukuoka H."/>
            <person name="Yoshimura T."/>
            <person name="Itoh K."/>
            <person name="O'Sullivan D.J."/>
            <person name="McKay L.L."/>
            <person name="Ohno H."/>
            <person name="Kikuchi J."/>
            <person name="Masaoka T."/>
            <person name="Hattori M."/>
        </authorList>
    </citation>
    <scope>NUCLEOTIDE SEQUENCE [LARGE SCALE GENOMIC DNA]</scope>
    <source>
        <strain>JCM 1112</strain>
    </source>
</reference>